<keyword id="KW-0067">ATP-binding</keyword>
<keyword id="KW-0315">Glutamine amidotransferase</keyword>
<keyword id="KW-0436">Ligase</keyword>
<keyword id="KW-0460">Magnesium</keyword>
<keyword id="KW-0479">Metal-binding</keyword>
<keyword id="KW-0547">Nucleotide-binding</keyword>
<keyword id="KW-0665">Pyrimidine biosynthesis</keyword>
<keyword id="KW-1185">Reference proteome</keyword>
<name>PYRG_BLOPB</name>
<dbReference type="EC" id="6.3.4.2" evidence="1"/>
<dbReference type="EMBL" id="CP000016">
    <property type="protein sequence ID" value="AAZ40801.1"/>
    <property type="molecule type" value="Genomic_DNA"/>
</dbReference>
<dbReference type="RefSeq" id="WP_011282708.1">
    <property type="nucleotide sequence ID" value="NC_007292.1"/>
</dbReference>
<dbReference type="SMR" id="Q493N6"/>
<dbReference type="STRING" id="291272.BPEN_161"/>
<dbReference type="KEGG" id="bpn:BPEN_161"/>
<dbReference type="eggNOG" id="COG0504">
    <property type="taxonomic scope" value="Bacteria"/>
</dbReference>
<dbReference type="HOGENOM" id="CLU_011675_5_0_6"/>
<dbReference type="OrthoDB" id="9801107at2"/>
<dbReference type="UniPathway" id="UPA00159">
    <property type="reaction ID" value="UER00277"/>
</dbReference>
<dbReference type="Proteomes" id="UP000007794">
    <property type="component" value="Chromosome"/>
</dbReference>
<dbReference type="GO" id="GO:0005829">
    <property type="term" value="C:cytosol"/>
    <property type="evidence" value="ECO:0007669"/>
    <property type="project" value="TreeGrafter"/>
</dbReference>
<dbReference type="GO" id="GO:0005524">
    <property type="term" value="F:ATP binding"/>
    <property type="evidence" value="ECO:0007669"/>
    <property type="project" value="UniProtKB-KW"/>
</dbReference>
<dbReference type="GO" id="GO:0003883">
    <property type="term" value="F:CTP synthase activity"/>
    <property type="evidence" value="ECO:0007669"/>
    <property type="project" value="UniProtKB-UniRule"/>
</dbReference>
<dbReference type="GO" id="GO:0004359">
    <property type="term" value="F:glutaminase activity"/>
    <property type="evidence" value="ECO:0007669"/>
    <property type="project" value="RHEA"/>
</dbReference>
<dbReference type="GO" id="GO:0042802">
    <property type="term" value="F:identical protein binding"/>
    <property type="evidence" value="ECO:0007669"/>
    <property type="project" value="TreeGrafter"/>
</dbReference>
<dbReference type="GO" id="GO:0046872">
    <property type="term" value="F:metal ion binding"/>
    <property type="evidence" value="ECO:0007669"/>
    <property type="project" value="UniProtKB-KW"/>
</dbReference>
<dbReference type="GO" id="GO:0044210">
    <property type="term" value="P:'de novo' CTP biosynthetic process"/>
    <property type="evidence" value="ECO:0007669"/>
    <property type="project" value="UniProtKB-UniRule"/>
</dbReference>
<dbReference type="GO" id="GO:0019856">
    <property type="term" value="P:pyrimidine nucleobase biosynthetic process"/>
    <property type="evidence" value="ECO:0007669"/>
    <property type="project" value="TreeGrafter"/>
</dbReference>
<dbReference type="CDD" id="cd03113">
    <property type="entry name" value="CTPS_N"/>
    <property type="match status" value="1"/>
</dbReference>
<dbReference type="CDD" id="cd01746">
    <property type="entry name" value="GATase1_CTP_Synthase"/>
    <property type="match status" value="1"/>
</dbReference>
<dbReference type="FunFam" id="3.40.50.300:FF:000009">
    <property type="entry name" value="CTP synthase"/>
    <property type="match status" value="1"/>
</dbReference>
<dbReference type="FunFam" id="3.40.50.880:FF:000002">
    <property type="entry name" value="CTP synthase"/>
    <property type="match status" value="1"/>
</dbReference>
<dbReference type="Gene3D" id="3.40.50.880">
    <property type="match status" value="1"/>
</dbReference>
<dbReference type="Gene3D" id="3.40.50.300">
    <property type="entry name" value="P-loop containing nucleotide triphosphate hydrolases"/>
    <property type="match status" value="1"/>
</dbReference>
<dbReference type="HAMAP" id="MF_01227">
    <property type="entry name" value="PyrG"/>
    <property type="match status" value="1"/>
</dbReference>
<dbReference type="InterPro" id="IPR029062">
    <property type="entry name" value="Class_I_gatase-like"/>
</dbReference>
<dbReference type="InterPro" id="IPR004468">
    <property type="entry name" value="CTP_synthase"/>
</dbReference>
<dbReference type="InterPro" id="IPR017456">
    <property type="entry name" value="CTP_synthase_N"/>
</dbReference>
<dbReference type="InterPro" id="IPR017926">
    <property type="entry name" value="GATASE"/>
</dbReference>
<dbReference type="InterPro" id="IPR033828">
    <property type="entry name" value="GATase1_CTP_Synthase"/>
</dbReference>
<dbReference type="InterPro" id="IPR027417">
    <property type="entry name" value="P-loop_NTPase"/>
</dbReference>
<dbReference type="NCBIfam" id="NF003792">
    <property type="entry name" value="PRK05380.1"/>
    <property type="match status" value="1"/>
</dbReference>
<dbReference type="NCBIfam" id="TIGR00337">
    <property type="entry name" value="PyrG"/>
    <property type="match status" value="1"/>
</dbReference>
<dbReference type="PANTHER" id="PTHR11550">
    <property type="entry name" value="CTP SYNTHASE"/>
    <property type="match status" value="1"/>
</dbReference>
<dbReference type="PANTHER" id="PTHR11550:SF0">
    <property type="entry name" value="CTP SYNTHASE-RELATED"/>
    <property type="match status" value="1"/>
</dbReference>
<dbReference type="Pfam" id="PF06418">
    <property type="entry name" value="CTP_synth_N"/>
    <property type="match status" value="1"/>
</dbReference>
<dbReference type="Pfam" id="PF00117">
    <property type="entry name" value="GATase"/>
    <property type="match status" value="1"/>
</dbReference>
<dbReference type="SUPFAM" id="SSF52317">
    <property type="entry name" value="Class I glutamine amidotransferase-like"/>
    <property type="match status" value="1"/>
</dbReference>
<dbReference type="SUPFAM" id="SSF52540">
    <property type="entry name" value="P-loop containing nucleoside triphosphate hydrolases"/>
    <property type="match status" value="1"/>
</dbReference>
<dbReference type="PROSITE" id="PS51273">
    <property type="entry name" value="GATASE_TYPE_1"/>
    <property type="match status" value="1"/>
</dbReference>
<proteinExistence type="inferred from homology"/>
<protein>
    <recommendedName>
        <fullName evidence="1">CTP synthase</fullName>
        <ecNumber evidence="1">6.3.4.2</ecNumber>
    </recommendedName>
    <alternativeName>
        <fullName evidence="1">Cytidine 5'-triphosphate synthase</fullName>
    </alternativeName>
    <alternativeName>
        <fullName evidence="1">Cytidine triphosphate synthetase</fullName>
        <shortName evidence="1">CTP synthetase</shortName>
        <shortName evidence="1">CTPS</shortName>
    </alternativeName>
    <alternativeName>
        <fullName evidence="1">UTP--ammonia ligase</fullName>
    </alternativeName>
</protein>
<gene>
    <name evidence="1" type="primary">pyrG</name>
    <name type="ordered locus">BPEN_161</name>
</gene>
<organism>
    <name type="scientific">Blochmanniella pennsylvanica (strain BPEN)</name>
    <dbReference type="NCBI Taxonomy" id="291272"/>
    <lineage>
        <taxon>Bacteria</taxon>
        <taxon>Pseudomonadati</taxon>
        <taxon>Pseudomonadota</taxon>
        <taxon>Gammaproteobacteria</taxon>
        <taxon>Enterobacterales</taxon>
        <taxon>Enterobacteriaceae</taxon>
        <taxon>ant endosymbionts</taxon>
        <taxon>Candidatus Blochmanniella</taxon>
    </lineage>
</organism>
<evidence type="ECO:0000255" key="1">
    <source>
        <dbReference type="HAMAP-Rule" id="MF_01227"/>
    </source>
</evidence>
<feature type="chain" id="PRO_0000266071" description="CTP synthase">
    <location>
        <begin position="1"/>
        <end position="548"/>
    </location>
</feature>
<feature type="domain" description="Glutamine amidotransferase type-1" evidence="1">
    <location>
        <begin position="291"/>
        <end position="543"/>
    </location>
</feature>
<feature type="region of interest" description="Amidoligase domain" evidence="1">
    <location>
        <begin position="1"/>
        <end position="266"/>
    </location>
</feature>
<feature type="active site" description="Nucleophile; for glutamine hydrolysis" evidence="1">
    <location>
        <position position="380"/>
    </location>
</feature>
<feature type="active site" evidence="1">
    <location>
        <position position="516"/>
    </location>
</feature>
<feature type="active site" evidence="1">
    <location>
        <position position="518"/>
    </location>
</feature>
<feature type="binding site" evidence="1">
    <location>
        <position position="14"/>
    </location>
    <ligand>
        <name>CTP</name>
        <dbReference type="ChEBI" id="CHEBI:37563"/>
        <note>allosteric inhibitor</note>
    </ligand>
</feature>
<feature type="binding site" evidence="1">
    <location>
        <position position="14"/>
    </location>
    <ligand>
        <name>UTP</name>
        <dbReference type="ChEBI" id="CHEBI:46398"/>
    </ligand>
</feature>
<feature type="binding site" evidence="1">
    <location>
        <begin position="15"/>
        <end position="20"/>
    </location>
    <ligand>
        <name>ATP</name>
        <dbReference type="ChEBI" id="CHEBI:30616"/>
    </ligand>
</feature>
<feature type="binding site" evidence="1">
    <location>
        <position position="72"/>
    </location>
    <ligand>
        <name>ATP</name>
        <dbReference type="ChEBI" id="CHEBI:30616"/>
    </ligand>
</feature>
<feature type="binding site" evidence="1">
    <location>
        <position position="72"/>
    </location>
    <ligand>
        <name>Mg(2+)</name>
        <dbReference type="ChEBI" id="CHEBI:18420"/>
    </ligand>
</feature>
<feature type="binding site" evidence="1">
    <location>
        <position position="140"/>
    </location>
    <ligand>
        <name>Mg(2+)</name>
        <dbReference type="ChEBI" id="CHEBI:18420"/>
    </ligand>
</feature>
<feature type="binding site" evidence="1">
    <location>
        <begin position="147"/>
        <end position="149"/>
    </location>
    <ligand>
        <name>CTP</name>
        <dbReference type="ChEBI" id="CHEBI:37563"/>
        <note>allosteric inhibitor</note>
    </ligand>
</feature>
<feature type="binding site" evidence="1">
    <location>
        <begin position="187"/>
        <end position="192"/>
    </location>
    <ligand>
        <name>CTP</name>
        <dbReference type="ChEBI" id="CHEBI:37563"/>
        <note>allosteric inhibitor</note>
    </ligand>
</feature>
<feature type="binding site" evidence="1">
    <location>
        <begin position="187"/>
        <end position="192"/>
    </location>
    <ligand>
        <name>UTP</name>
        <dbReference type="ChEBI" id="CHEBI:46398"/>
    </ligand>
</feature>
<feature type="binding site" evidence="1">
    <location>
        <position position="223"/>
    </location>
    <ligand>
        <name>CTP</name>
        <dbReference type="ChEBI" id="CHEBI:37563"/>
        <note>allosteric inhibitor</note>
    </ligand>
</feature>
<feature type="binding site" evidence="1">
    <location>
        <position position="223"/>
    </location>
    <ligand>
        <name>UTP</name>
        <dbReference type="ChEBI" id="CHEBI:46398"/>
    </ligand>
</feature>
<feature type="binding site" evidence="1">
    <location>
        <position position="353"/>
    </location>
    <ligand>
        <name>L-glutamine</name>
        <dbReference type="ChEBI" id="CHEBI:58359"/>
    </ligand>
</feature>
<feature type="binding site" evidence="1">
    <location>
        <begin position="381"/>
        <end position="384"/>
    </location>
    <ligand>
        <name>L-glutamine</name>
        <dbReference type="ChEBI" id="CHEBI:58359"/>
    </ligand>
</feature>
<feature type="binding site" evidence="1">
    <location>
        <position position="404"/>
    </location>
    <ligand>
        <name>L-glutamine</name>
        <dbReference type="ChEBI" id="CHEBI:58359"/>
    </ligand>
</feature>
<feature type="binding site" evidence="1">
    <location>
        <position position="471"/>
    </location>
    <ligand>
        <name>L-glutamine</name>
        <dbReference type="ChEBI" id="CHEBI:58359"/>
    </ligand>
</feature>
<reference key="1">
    <citation type="journal article" date="2005" name="Genome Res.">
        <title>Genome sequence of Blochmannia pennsylvanicus indicates parallel evolutionary trends among bacterial mutualists of insects.</title>
        <authorList>
            <person name="Degnan P.H."/>
            <person name="Lazarus A.B."/>
            <person name="Wernegreen J.J."/>
        </authorList>
    </citation>
    <scope>NUCLEOTIDE SEQUENCE [LARGE SCALE GENOMIC DNA]</scope>
    <source>
        <strain>BPEN</strain>
    </source>
</reference>
<accession>Q493N6</accession>
<comment type="function">
    <text evidence="1">Catalyzes the ATP-dependent amination of UTP to CTP with either L-glutamine or ammonia as the source of nitrogen. Regulates intracellular CTP levels through interactions with the four ribonucleotide triphosphates.</text>
</comment>
<comment type="catalytic activity">
    <reaction evidence="1">
        <text>UTP + L-glutamine + ATP + H2O = CTP + L-glutamate + ADP + phosphate + 2 H(+)</text>
        <dbReference type="Rhea" id="RHEA:26426"/>
        <dbReference type="ChEBI" id="CHEBI:15377"/>
        <dbReference type="ChEBI" id="CHEBI:15378"/>
        <dbReference type="ChEBI" id="CHEBI:29985"/>
        <dbReference type="ChEBI" id="CHEBI:30616"/>
        <dbReference type="ChEBI" id="CHEBI:37563"/>
        <dbReference type="ChEBI" id="CHEBI:43474"/>
        <dbReference type="ChEBI" id="CHEBI:46398"/>
        <dbReference type="ChEBI" id="CHEBI:58359"/>
        <dbReference type="ChEBI" id="CHEBI:456216"/>
        <dbReference type="EC" id="6.3.4.2"/>
    </reaction>
</comment>
<comment type="catalytic activity">
    <reaction evidence="1">
        <text>L-glutamine + H2O = L-glutamate + NH4(+)</text>
        <dbReference type="Rhea" id="RHEA:15889"/>
        <dbReference type="ChEBI" id="CHEBI:15377"/>
        <dbReference type="ChEBI" id="CHEBI:28938"/>
        <dbReference type="ChEBI" id="CHEBI:29985"/>
        <dbReference type="ChEBI" id="CHEBI:58359"/>
    </reaction>
</comment>
<comment type="catalytic activity">
    <reaction evidence="1">
        <text>UTP + NH4(+) + ATP = CTP + ADP + phosphate + 2 H(+)</text>
        <dbReference type="Rhea" id="RHEA:16597"/>
        <dbReference type="ChEBI" id="CHEBI:15378"/>
        <dbReference type="ChEBI" id="CHEBI:28938"/>
        <dbReference type="ChEBI" id="CHEBI:30616"/>
        <dbReference type="ChEBI" id="CHEBI:37563"/>
        <dbReference type="ChEBI" id="CHEBI:43474"/>
        <dbReference type="ChEBI" id="CHEBI:46398"/>
        <dbReference type="ChEBI" id="CHEBI:456216"/>
    </reaction>
</comment>
<comment type="activity regulation">
    <text evidence="1">Allosterically activated by GTP, when glutamine is the substrate; GTP has no effect on the reaction when ammonia is the substrate. The allosteric effector GTP functions by stabilizing the protein conformation that binds the tetrahedral intermediate(s) formed during glutamine hydrolysis. Inhibited by the product CTP, via allosteric rather than competitive inhibition.</text>
</comment>
<comment type="pathway">
    <text evidence="1">Pyrimidine metabolism; CTP biosynthesis via de novo pathway; CTP from UDP: step 2/2.</text>
</comment>
<comment type="subunit">
    <text evidence="1">Homotetramer.</text>
</comment>
<comment type="miscellaneous">
    <text evidence="1">CTPSs have evolved a hybrid strategy for distinguishing between UTP and CTP. The overlapping regions of the product feedback inhibitory and substrate sites recognize a common feature in both compounds, the triphosphate moiety. To differentiate isosteric substrate and product pyrimidine rings, an additional pocket far from the expected kinase/ligase catalytic site, specifically recognizes the cytosine and ribose portions of the product inhibitor.</text>
</comment>
<comment type="similarity">
    <text evidence="1">Belongs to the CTP synthase family.</text>
</comment>
<sequence length="548" mass="61301">MRVNYIFVTGGVVSSLGKGIATASLAAVLEARGLSVTIIKLDPYINMDPGTISPVQHGEVFITEDGAETDLDLGHYERFIRTKMRHHNNFTAGKIYADVLRKERRGDYLGATIQIIPHVTDTIKKWLIAGAFGHDVLLVEIGGTVGDIESLPFLEAIRQMVMEVNREQTLYIHLTLVPFIAVSGELKTKPTQHSVKELLSIGIQPDILICRSDRVISNSERKKISLFCNVPKQAIIALQDVDSIYKIPALLKDQGLDNYICKRFNLNCPEANLSDWEEVIYYQEHPIGEVTVGMVGKYIELVDAYKSVTEALKHAGIKNRFIVNIRLINSQDVEKLGIEKTLKGLDAILVPGGFGYRGVEGKILSAQYARENNIPYFGICLGMQVALIEFARHVAGMPEANSTEFVTNCKCPVIALITECKDENGIFITHNDNTNLGGTMRLGNQACYLIKGSLTHQIYGKSTILERHRHRYEVNNMLLKHITHAGLSCVGFSKKNNLVEVIEYPNHPWFIGSQFHPEFNSTPREGHPLFIGFIKAAIEYQHRHNKLI</sequence>